<reference key="1">
    <citation type="journal article" date="2009" name="PLoS Biol.">
        <title>Lineage-specific biology revealed by a finished genome assembly of the mouse.</title>
        <authorList>
            <person name="Church D.M."/>
            <person name="Goodstadt L."/>
            <person name="Hillier L.W."/>
            <person name="Zody M.C."/>
            <person name="Goldstein S."/>
            <person name="She X."/>
            <person name="Bult C.J."/>
            <person name="Agarwala R."/>
            <person name="Cherry J.L."/>
            <person name="DiCuccio M."/>
            <person name="Hlavina W."/>
            <person name="Kapustin Y."/>
            <person name="Meric P."/>
            <person name="Maglott D."/>
            <person name="Birtle Z."/>
            <person name="Marques A.C."/>
            <person name="Graves T."/>
            <person name="Zhou S."/>
            <person name="Teague B."/>
            <person name="Potamousis K."/>
            <person name="Churas C."/>
            <person name="Place M."/>
            <person name="Herschleb J."/>
            <person name="Runnheim R."/>
            <person name="Forrest D."/>
            <person name="Amos-Landgraf J."/>
            <person name="Schwartz D.C."/>
            <person name="Cheng Z."/>
            <person name="Lindblad-Toh K."/>
            <person name="Eichler E.E."/>
            <person name="Ponting C.P."/>
        </authorList>
    </citation>
    <scope>NUCLEOTIDE SEQUENCE [LARGE SCALE GENOMIC DNA]</scope>
    <source>
        <strain>C57BL/6J</strain>
    </source>
</reference>
<reference key="2">
    <citation type="submission" date="2005-07" db="EMBL/GenBank/DDBJ databases">
        <authorList>
            <person name="Mural R.J."/>
            <person name="Adams M.D."/>
            <person name="Myers E.W."/>
            <person name="Smith H.O."/>
            <person name="Venter J.C."/>
        </authorList>
    </citation>
    <scope>NUCLEOTIDE SEQUENCE [LARGE SCALE GENOMIC DNA]</scope>
</reference>
<reference key="3">
    <citation type="journal article" date="2005" name="Science">
        <title>The transcriptional landscape of the mammalian genome.</title>
        <authorList>
            <person name="Carninci P."/>
            <person name="Kasukawa T."/>
            <person name="Katayama S."/>
            <person name="Gough J."/>
            <person name="Frith M.C."/>
            <person name="Maeda N."/>
            <person name="Oyama R."/>
            <person name="Ravasi T."/>
            <person name="Lenhard B."/>
            <person name="Wells C."/>
            <person name="Kodzius R."/>
            <person name="Shimokawa K."/>
            <person name="Bajic V.B."/>
            <person name="Brenner S.E."/>
            <person name="Batalov S."/>
            <person name="Forrest A.R."/>
            <person name="Zavolan M."/>
            <person name="Davis M.J."/>
            <person name="Wilming L.G."/>
            <person name="Aidinis V."/>
            <person name="Allen J.E."/>
            <person name="Ambesi-Impiombato A."/>
            <person name="Apweiler R."/>
            <person name="Aturaliya R.N."/>
            <person name="Bailey T.L."/>
            <person name="Bansal M."/>
            <person name="Baxter L."/>
            <person name="Beisel K.W."/>
            <person name="Bersano T."/>
            <person name="Bono H."/>
            <person name="Chalk A.M."/>
            <person name="Chiu K.P."/>
            <person name="Choudhary V."/>
            <person name="Christoffels A."/>
            <person name="Clutterbuck D.R."/>
            <person name="Crowe M.L."/>
            <person name="Dalla E."/>
            <person name="Dalrymple B.P."/>
            <person name="de Bono B."/>
            <person name="Della Gatta G."/>
            <person name="di Bernardo D."/>
            <person name="Down T."/>
            <person name="Engstrom P."/>
            <person name="Fagiolini M."/>
            <person name="Faulkner G."/>
            <person name="Fletcher C.F."/>
            <person name="Fukushima T."/>
            <person name="Furuno M."/>
            <person name="Futaki S."/>
            <person name="Gariboldi M."/>
            <person name="Georgii-Hemming P."/>
            <person name="Gingeras T.R."/>
            <person name="Gojobori T."/>
            <person name="Green R.E."/>
            <person name="Gustincich S."/>
            <person name="Harbers M."/>
            <person name="Hayashi Y."/>
            <person name="Hensch T.K."/>
            <person name="Hirokawa N."/>
            <person name="Hill D."/>
            <person name="Huminiecki L."/>
            <person name="Iacono M."/>
            <person name="Ikeo K."/>
            <person name="Iwama A."/>
            <person name="Ishikawa T."/>
            <person name="Jakt M."/>
            <person name="Kanapin A."/>
            <person name="Katoh M."/>
            <person name="Kawasawa Y."/>
            <person name="Kelso J."/>
            <person name="Kitamura H."/>
            <person name="Kitano H."/>
            <person name="Kollias G."/>
            <person name="Krishnan S.P."/>
            <person name="Kruger A."/>
            <person name="Kummerfeld S.K."/>
            <person name="Kurochkin I.V."/>
            <person name="Lareau L.F."/>
            <person name="Lazarevic D."/>
            <person name="Lipovich L."/>
            <person name="Liu J."/>
            <person name="Liuni S."/>
            <person name="McWilliam S."/>
            <person name="Madan Babu M."/>
            <person name="Madera M."/>
            <person name="Marchionni L."/>
            <person name="Matsuda H."/>
            <person name="Matsuzawa S."/>
            <person name="Miki H."/>
            <person name="Mignone F."/>
            <person name="Miyake S."/>
            <person name="Morris K."/>
            <person name="Mottagui-Tabar S."/>
            <person name="Mulder N."/>
            <person name="Nakano N."/>
            <person name="Nakauchi H."/>
            <person name="Ng P."/>
            <person name="Nilsson R."/>
            <person name="Nishiguchi S."/>
            <person name="Nishikawa S."/>
            <person name="Nori F."/>
            <person name="Ohara O."/>
            <person name="Okazaki Y."/>
            <person name="Orlando V."/>
            <person name="Pang K.C."/>
            <person name="Pavan W.J."/>
            <person name="Pavesi G."/>
            <person name="Pesole G."/>
            <person name="Petrovsky N."/>
            <person name="Piazza S."/>
            <person name="Reed J."/>
            <person name="Reid J.F."/>
            <person name="Ring B.Z."/>
            <person name="Ringwald M."/>
            <person name="Rost B."/>
            <person name="Ruan Y."/>
            <person name="Salzberg S.L."/>
            <person name="Sandelin A."/>
            <person name="Schneider C."/>
            <person name="Schoenbach C."/>
            <person name="Sekiguchi K."/>
            <person name="Semple C.A."/>
            <person name="Seno S."/>
            <person name="Sessa L."/>
            <person name="Sheng Y."/>
            <person name="Shibata Y."/>
            <person name="Shimada H."/>
            <person name="Shimada K."/>
            <person name="Silva D."/>
            <person name="Sinclair B."/>
            <person name="Sperling S."/>
            <person name="Stupka E."/>
            <person name="Sugiura K."/>
            <person name="Sultana R."/>
            <person name="Takenaka Y."/>
            <person name="Taki K."/>
            <person name="Tammoja K."/>
            <person name="Tan S.L."/>
            <person name="Tang S."/>
            <person name="Taylor M.S."/>
            <person name="Tegner J."/>
            <person name="Teichmann S.A."/>
            <person name="Ueda H.R."/>
            <person name="van Nimwegen E."/>
            <person name="Verardo R."/>
            <person name="Wei C.L."/>
            <person name="Yagi K."/>
            <person name="Yamanishi H."/>
            <person name="Zabarovsky E."/>
            <person name="Zhu S."/>
            <person name="Zimmer A."/>
            <person name="Hide W."/>
            <person name="Bult C."/>
            <person name="Grimmond S.M."/>
            <person name="Teasdale R.D."/>
            <person name="Liu E.T."/>
            <person name="Brusic V."/>
            <person name="Quackenbush J."/>
            <person name="Wahlestedt C."/>
            <person name="Mattick J.S."/>
            <person name="Hume D.A."/>
            <person name="Kai C."/>
            <person name="Sasaki D."/>
            <person name="Tomaru Y."/>
            <person name="Fukuda S."/>
            <person name="Kanamori-Katayama M."/>
            <person name="Suzuki M."/>
            <person name="Aoki J."/>
            <person name="Arakawa T."/>
            <person name="Iida J."/>
            <person name="Imamura K."/>
            <person name="Itoh M."/>
            <person name="Kato T."/>
            <person name="Kawaji H."/>
            <person name="Kawagashira N."/>
            <person name="Kawashima T."/>
            <person name="Kojima M."/>
            <person name="Kondo S."/>
            <person name="Konno H."/>
            <person name="Nakano K."/>
            <person name="Ninomiya N."/>
            <person name="Nishio T."/>
            <person name="Okada M."/>
            <person name="Plessy C."/>
            <person name="Shibata K."/>
            <person name="Shiraki T."/>
            <person name="Suzuki S."/>
            <person name="Tagami M."/>
            <person name="Waki K."/>
            <person name="Watahiki A."/>
            <person name="Okamura-Oho Y."/>
            <person name="Suzuki H."/>
            <person name="Kawai J."/>
            <person name="Hayashizaki Y."/>
        </authorList>
    </citation>
    <scope>NUCLEOTIDE SEQUENCE [LARGE SCALE MRNA] OF 1441-1846</scope>
    <source>
        <strain>C57BL/6J</strain>
        <tissue>Spinal ganglion</tissue>
    </source>
</reference>
<reference key="4">
    <citation type="journal article" date="2010" name="Cell">
        <title>A tissue-specific atlas of mouse protein phosphorylation and expression.</title>
        <authorList>
            <person name="Huttlin E.L."/>
            <person name="Jedrychowski M.P."/>
            <person name="Elias J.E."/>
            <person name="Goswami T."/>
            <person name="Rad R."/>
            <person name="Beausoleil S.A."/>
            <person name="Villen J."/>
            <person name="Haas W."/>
            <person name="Sowa M.E."/>
            <person name="Gygi S.P."/>
        </authorList>
    </citation>
    <scope>PHOSPHORYLATION [LARGE SCALE ANALYSIS] AT SER-286 AND SER-289</scope>
    <scope>IDENTIFICATION BY MASS SPECTROMETRY [LARGE SCALE ANALYSIS]</scope>
    <source>
        <tissue>Brain</tissue>
        <tissue>Brown adipose tissue</tissue>
        <tissue>Heart</tissue>
        <tissue>Kidney</tissue>
        <tissue>Liver</tissue>
        <tissue>Lung</tissue>
        <tissue>Pancreas</tissue>
        <tissue>Spleen</tissue>
        <tissue>Testis</tissue>
    </source>
</reference>
<protein>
    <recommendedName>
        <fullName>Brefeldin A-inhibited guanine nucleotide-exchange protein 1</fullName>
        <shortName>BIG1</shortName>
        <shortName>Brefeldin A-inhibited GEP 1</shortName>
    </recommendedName>
    <alternativeName>
        <fullName>ADP-ribosylation factor guanine nucleotide-exchange factor 1</fullName>
    </alternativeName>
</protein>
<accession>G3X9K3</accession>
<accession>Q8BKL2</accession>
<comment type="function">
    <text evidence="3">Promotes guanine-nucleotide exchange on ARF1 and ARF3. Promotes the activation of ARF1/ARF3 through replacement of GDP with GTP. Involved in vesicular trafficking. Required for the maintenance of Golgi structure; the function may be independent of its GEF activity. Required for the maturation of integrin beta-1 in the Golgi. Involved in the establishment and persistence of cell polarity during directed cell movement in wound healing. Proposed to act as A kinase-anchoring protein (AKAP) and may mediate crosstalk between Arf and PKA pathways. Inhibits GAP activity of MYO9B probably through competitive RhoA binding. The function in the nucleus remains to be determined (By similarity).</text>
</comment>
<comment type="activity regulation">
    <text evidence="1">Inhibited by brefeldin A.</text>
</comment>
<comment type="subunit">
    <text evidence="3">Homodimer. Interacts with ARFGEF2/BIG2; both proteins are probably part of the same or very similar macromolecular complexes. Interacts with FKBP2. Interacts with MYO9B. Interacts with PRKAR1A and PRKAR2A. Interacts with PPP1CC. Interacts with NCL, FBL, NUP62 and U3 small nucleolar RNA. Interacts with DPY30. Interacts with PDE3A. Interacts with KANK1. Interacts with TBC1D22A and TBC1D22B.</text>
</comment>
<comment type="subcellular location">
    <subcellularLocation>
        <location evidence="1">Cytoplasm</location>
    </subcellularLocation>
    <subcellularLocation>
        <location evidence="1">Cytoplasm</location>
        <location evidence="1">Perinuclear region</location>
    </subcellularLocation>
    <subcellularLocation>
        <location evidence="1">Golgi apparatus</location>
    </subcellularLocation>
    <subcellularLocation>
        <location evidence="1">Golgi apparatus</location>
        <location evidence="1">trans-Golgi network</location>
    </subcellularLocation>
    <subcellularLocation>
        <location evidence="1">Nucleus</location>
    </subcellularLocation>
    <subcellularLocation>
        <location evidence="1">Nucleus</location>
        <location evidence="1">Nucleolus</location>
    </subcellularLocation>
    <subcellularLocation>
        <location evidence="1">Nucleus matrix</location>
    </subcellularLocation>
    <subcellularLocation>
        <location evidence="1">Membrane</location>
    </subcellularLocation>
    <text evidence="1">Translocates from cytoplasm to membranes and nucleus upon cAMP treatment.</text>
</comment>
<comment type="PTM">
    <text evidence="1">Phosphorylated. In vitro phosphorylated by PKA reducing its GEF activity and dephosphorylated by phosphatase PP1 (By similarity).</text>
</comment>
<evidence type="ECO:0000250" key="1"/>
<evidence type="ECO:0000250" key="2">
    <source>
        <dbReference type="UniProtKB" id="D4A631"/>
    </source>
</evidence>
<evidence type="ECO:0000250" key="3">
    <source>
        <dbReference type="UniProtKB" id="Q9Y6D6"/>
    </source>
</evidence>
<evidence type="ECO:0000255" key="4">
    <source>
        <dbReference type="PROSITE-ProRule" id="PRU00189"/>
    </source>
</evidence>
<evidence type="ECO:0000256" key="5">
    <source>
        <dbReference type="SAM" id="MobiDB-lite"/>
    </source>
</evidence>
<evidence type="ECO:0007744" key="6">
    <source>
    </source>
</evidence>
<organism>
    <name type="scientific">Mus musculus</name>
    <name type="common">Mouse</name>
    <dbReference type="NCBI Taxonomy" id="10090"/>
    <lineage>
        <taxon>Eukaryota</taxon>
        <taxon>Metazoa</taxon>
        <taxon>Chordata</taxon>
        <taxon>Craniata</taxon>
        <taxon>Vertebrata</taxon>
        <taxon>Euteleostomi</taxon>
        <taxon>Mammalia</taxon>
        <taxon>Eutheria</taxon>
        <taxon>Euarchontoglires</taxon>
        <taxon>Glires</taxon>
        <taxon>Rodentia</taxon>
        <taxon>Myomorpha</taxon>
        <taxon>Muroidea</taxon>
        <taxon>Muridae</taxon>
        <taxon>Murinae</taxon>
        <taxon>Mus</taxon>
        <taxon>Mus</taxon>
    </lineage>
</organism>
<proteinExistence type="evidence at protein level"/>
<dbReference type="EMBL" id="AC102462">
    <property type="status" value="NOT_ANNOTATED_CDS"/>
    <property type="molecule type" value="Genomic_DNA"/>
</dbReference>
<dbReference type="EMBL" id="AC159972">
    <property type="status" value="NOT_ANNOTATED_CDS"/>
    <property type="molecule type" value="Genomic_DNA"/>
</dbReference>
<dbReference type="EMBL" id="CH466536">
    <property type="protein sequence ID" value="EDL14306.1"/>
    <property type="molecule type" value="Genomic_DNA"/>
</dbReference>
<dbReference type="EMBL" id="AK051592">
    <property type="protein sequence ID" value="BAC34685.1"/>
    <property type="molecule type" value="mRNA"/>
</dbReference>
<dbReference type="CCDS" id="CCDS35512.1"/>
<dbReference type="RefSeq" id="NP_001095900.1">
    <property type="nucleotide sequence ID" value="NM_001102430.1"/>
</dbReference>
<dbReference type="SMR" id="G3X9K3"/>
<dbReference type="BioGRID" id="229258">
    <property type="interactions" value="3"/>
</dbReference>
<dbReference type="FunCoup" id="G3X9K3">
    <property type="interactions" value="4792"/>
</dbReference>
<dbReference type="IntAct" id="G3X9K3">
    <property type="interactions" value="1"/>
</dbReference>
<dbReference type="MINT" id="G3X9K3"/>
<dbReference type="STRING" id="10090.ENSMUSP00000085986"/>
<dbReference type="GlyGen" id="G3X9K3">
    <property type="glycosylation" value="1 site"/>
</dbReference>
<dbReference type="iPTMnet" id="G3X9K3"/>
<dbReference type="PhosphoSitePlus" id="G3X9K3"/>
<dbReference type="SwissPalm" id="G3X9K3"/>
<dbReference type="jPOST" id="G3X9K3"/>
<dbReference type="PaxDb" id="10090-ENSMUSP00000085986"/>
<dbReference type="PeptideAtlas" id="G3X9K3"/>
<dbReference type="ProteomicsDB" id="273613"/>
<dbReference type="Pumba" id="G3X9K3"/>
<dbReference type="Antibodypedia" id="12092">
    <property type="antibodies" value="77 antibodies from 15 providers"/>
</dbReference>
<dbReference type="Ensembl" id="ENSMUST00000088615.11">
    <property type="protein sequence ID" value="ENSMUSP00000085986.5"/>
    <property type="gene ID" value="ENSMUSG00000067851.12"/>
</dbReference>
<dbReference type="GeneID" id="211673"/>
<dbReference type="KEGG" id="mmu:211673"/>
<dbReference type="UCSC" id="uc007ahn.1">
    <property type="organism name" value="mouse"/>
</dbReference>
<dbReference type="AGR" id="MGI:2442988"/>
<dbReference type="CTD" id="10565"/>
<dbReference type="MGI" id="MGI:2442988">
    <property type="gene designation" value="Arfgef1"/>
</dbReference>
<dbReference type="VEuPathDB" id="HostDB:ENSMUSG00000067851"/>
<dbReference type="eggNOG" id="KOG0929">
    <property type="taxonomic scope" value="Eukaryota"/>
</dbReference>
<dbReference type="GeneTree" id="ENSGT00940000157108"/>
<dbReference type="HOGENOM" id="CLU_000691_1_0_1"/>
<dbReference type="InParanoid" id="G3X9K3"/>
<dbReference type="OMA" id="EVMCAYI"/>
<dbReference type="OrthoDB" id="18431at2759"/>
<dbReference type="PhylomeDB" id="G3X9K3"/>
<dbReference type="TreeFam" id="TF300714"/>
<dbReference type="BioGRID-ORCS" id="211673">
    <property type="hits" value="0 hits in 78 CRISPR screens"/>
</dbReference>
<dbReference type="ChiTaRS" id="Arfgef1">
    <property type="organism name" value="mouse"/>
</dbReference>
<dbReference type="PRO" id="PR:G3X9K3"/>
<dbReference type="Proteomes" id="UP000000589">
    <property type="component" value="Chromosome 1"/>
</dbReference>
<dbReference type="RNAct" id="G3X9K3">
    <property type="molecule type" value="protein"/>
</dbReference>
<dbReference type="Bgee" id="ENSMUSG00000067851">
    <property type="expression patterns" value="Expressed in gastrula and 267 other cell types or tissues"/>
</dbReference>
<dbReference type="ExpressionAtlas" id="G3X9K3">
    <property type="expression patterns" value="baseline and differential"/>
</dbReference>
<dbReference type="GO" id="GO:0005829">
    <property type="term" value="C:cytosol"/>
    <property type="evidence" value="ECO:0000250"/>
    <property type="project" value="UniProtKB"/>
</dbReference>
<dbReference type="GO" id="GO:0000139">
    <property type="term" value="C:Golgi membrane"/>
    <property type="evidence" value="ECO:0000250"/>
    <property type="project" value="UniProtKB"/>
</dbReference>
<dbReference type="GO" id="GO:0016363">
    <property type="term" value="C:nuclear matrix"/>
    <property type="evidence" value="ECO:0007669"/>
    <property type="project" value="UniProtKB-SubCell"/>
</dbReference>
<dbReference type="GO" id="GO:0005730">
    <property type="term" value="C:nucleolus"/>
    <property type="evidence" value="ECO:0000250"/>
    <property type="project" value="UniProtKB"/>
</dbReference>
<dbReference type="GO" id="GO:0005654">
    <property type="term" value="C:nucleoplasm"/>
    <property type="evidence" value="ECO:0007669"/>
    <property type="project" value="Ensembl"/>
</dbReference>
<dbReference type="GO" id="GO:0048471">
    <property type="term" value="C:perinuclear region of cytoplasm"/>
    <property type="evidence" value="ECO:0007669"/>
    <property type="project" value="UniProtKB-SubCell"/>
</dbReference>
<dbReference type="GO" id="GO:0030532">
    <property type="term" value="C:small nuclear ribonucleoprotein complex"/>
    <property type="evidence" value="ECO:0000250"/>
    <property type="project" value="UniProtKB"/>
</dbReference>
<dbReference type="GO" id="GO:0005802">
    <property type="term" value="C:trans-Golgi network"/>
    <property type="evidence" value="ECO:0000250"/>
    <property type="project" value="UniProtKB"/>
</dbReference>
<dbReference type="GO" id="GO:0005085">
    <property type="term" value="F:guanyl-nucleotide exchange factor activity"/>
    <property type="evidence" value="ECO:0007669"/>
    <property type="project" value="UniProtKB-KW"/>
</dbReference>
<dbReference type="GO" id="GO:0017022">
    <property type="term" value="F:myosin binding"/>
    <property type="evidence" value="ECO:0007669"/>
    <property type="project" value="Ensembl"/>
</dbReference>
<dbReference type="GO" id="GO:0034237">
    <property type="term" value="F:protein kinase A regulatory subunit binding"/>
    <property type="evidence" value="ECO:0000250"/>
    <property type="project" value="UniProtKB"/>
</dbReference>
<dbReference type="GO" id="GO:0010256">
    <property type="term" value="P:endomembrane system organization"/>
    <property type="evidence" value="ECO:0000250"/>
    <property type="project" value="UniProtKB"/>
</dbReference>
<dbReference type="GO" id="GO:0007030">
    <property type="term" value="P:Golgi organization"/>
    <property type="evidence" value="ECO:0000250"/>
    <property type="project" value="UniProtKB"/>
</dbReference>
<dbReference type="GO" id="GO:0030837">
    <property type="term" value="P:negative regulation of actin filament polymerization"/>
    <property type="evidence" value="ECO:0000250"/>
    <property type="project" value="UniProtKB"/>
</dbReference>
<dbReference type="GO" id="GO:0034260">
    <property type="term" value="P:negative regulation of GTPase activity"/>
    <property type="evidence" value="ECO:0000250"/>
    <property type="project" value="UniProtKB"/>
</dbReference>
<dbReference type="GO" id="GO:0031175">
    <property type="term" value="P:neuron projection development"/>
    <property type="evidence" value="ECO:0007669"/>
    <property type="project" value="Ensembl"/>
</dbReference>
<dbReference type="GO" id="GO:0051897">
    <property type="term" value="P:positive regulation of phosphatidylinositol 3-kinase/protein kinase B signal transduction"/>
    <property type="evidence" value="ECO:0007669"/>
    <property type="project" value="Ensembl"/>
</dbReference>
<dbReference type="GO" id="GO:0090303">
    <property type="term" value="P:positive regulation of wound healing"/>
    <property type="evidence" value="ECO:0000250"/>
    <property type="project" value="UniProtKB"/>
</dbReference>
<dbReference type="GO" id="GO:0006486">
    <property type="term" value="P:protein glycosylation"/>
    <property type="evidence" value="ECO:0000250"/>
    <property type="project" value="UniProtKB"/>
</dbReference>
<dbReference type="GO" id="GO:0015031">
    <property type="term" value="P:protein transport"/>
    <property type="evidence" value="ECO:0007669"/>
    <property type="project" value="UniProtKB-KW"/>
</dbReference>
<dbReference type="GO" id="GO:0032012">
    <property type="term" value="P:regulation of ARF protein signal transduction"/>
    <property type="evidence" value="ECO:0007669"/>
    <property type="project" value="InterPro"/>
</dbReference>
<dbReference type="GO" id="GO:2000114">
    <property type="term" value="P:regulation of establishment of cell polarity"/>
    <property type="evidence" value="ECO:0000250"/>
    <property type="project" value="UniProtKB"/>
</dbReference>
<dbReference type="CDD" id="cd00171">
    <property type="entry name" value="Sec7"/>
    <property type="match status" value="1"/>
</dbReference>
<dbReference type="FunFam" id="1.25.10.10:FF:000143">
    <property type="entry name" value="ADP-ribosylation factor guanine nucleotide-exchange factor 2 (brefeldin A-inhibited)"/>
    <property type="match status" value="1"/>
</dbReference>
<dbReference type="FunFam" id="1.10.1000.11:FF:000003">
    <property type="entry name" value="Brefeldin A-inhibited guanine nucleotide-exchange protein 1"/>
    <property type="match status" value="1"/>
</dbReference>
<dbReference type="FunFam" id="1.10.220.20:FF:000002">
    <property type="entry name" value="Brefeldin A-inhibited guanine nucleotide-exchange protein 1"/>
    <property type="match status" value="1"/>
</dbReference>
<dbReference type="Gene3D" id="1.10.220.20">
    <property type="match status" value="1"/>
</dbReference>
<dbReference type="Gene3D" id="1.10.1000.11">
    <property type="entry name" value="Arf Nucleotide-binding Site Opener,domain 2"/>
    <property type="match status" value="1"/>
</dbReference>
<dbReference type="Gene3D" id="1.25.10.10">
    <property type="entry name" value="Leucine-rich Repeat Variant"/>
    <property type="match status" value="1"/>
</dbReference>
<dbReference type="InterPro" id="IPR011989">
    <property type="entry name" value="ARM-like"/>
</dbReference>
<dbReference type="InterPro" id="IPR016024">
    <property type="entry name" value="ARM-type_fold"/>
</dbReference>
<dbReference type="InterPro" id="IPR032629">
    <property type="entry name" value="DCB_dom"/>
</dbReference>
<dbReference type="InterPro" id="IPR015403">
    <property type="entry name" value="Mon2/Sec7/BIG1-like_HDS"/>
</dbReference>
<dbReference type="InterPro" id="IPR032691">
    <property type="entry name" value="Mon2/Sec7/BIG1-like_HUS"/>
</dbReference>
<dbReference type="InterPro" id="IPR046455">
    <property type="entry name" value="Sec7/BIG1-like_C"/>
</dbReference>
<dbReference type="InterPro" id="IPR023394">
    <property type="entry name" value="Sec7_C_sf"/>
</dbReference>
<dbReference type="InterPro" id="IPR000904">
    <property type="entry name" value="Sec7_dom"/>
</dbReference>
<dbReference type="InterPro" id="IPR035999">
    <property type="entry name" value="Sec7_dom_sf"/>
</dbReference>
<dbReference type="PANTHER" id="PTHR10663:SF137">
    <property type="entry name" value="BREFELDIN A-INHIBITED GUANINE NUCLEOTIDE-EXCHANGE PROTEIN 1"/>
    <property type="match status" value="1"/>
</dbReference>
<dbReference type="PANTHER" id="PTHR10663">
    <property type="entry name" value="GUANYL-NUCLEOTIDE EXCHANGE FACTOR"/>
    <property type="match status" value="1"/>
</dbReference>
<dbReference type="Pfam" id="PF20252">
    <property type="entry name" value="BIG2_C"/>
    <property type="match status" value="1"/>
</dbReference>
<dbReference type="Pfam" id="PF16213">
    <property type="entry name" value="DCB"/>
    <property type="match status" value="1"/>
</dbReference>
<dbReference type="Pfam" id="PF01369">
    <property type="entry name" value="Sec7"/>
    <property type="match status" value="1"/>
</dbReference>
<dbReference type="Pfam" id="PF09324">
    <property type="entry name" value="Sec7-like_HDS"/>
    <property type="match status" value="1"/>
</dbReference>
<dbReference type="Pfam" id="PF12783">
    <property type="entry name" value="Sec7-like_HUS"/>
    <property type="match status" value="1"/>
</dbReference>
<dbReference type="SMART" id="SM00222">
    <property type="entry name" value="Sec7"/>
    <property type="match status" value="1"/>
</dbReference>
<dbReference type="SUPFAM" id="SSF48371">
    <property type="entry name" value="ARM repeat"/>
    <property type="match status" value="1"/>
</dbReference>
<dbReference type="SUPFAM" id="SSF48425">
    <property type="entry name" value="Sec7 domain"/>
    <property type="match status" value="1"/>
</dbReference>
<dbReference type="PROSITE" id="PS50190">
    <property type="entry name" value="SEC7"/>
    <property type="match status" value="1"/>
</dbReference>
<keyword id="KW-0963">Cytoplasm</keyword>
<keyword id="KW-0333">Golgi apparatus</keyword>
<keyword id="KW-0344">Guanine-nucleotide releasing factor</keyword>
<keyword id="KW-0472">Membrane</keyword>
<keyword id="KW-0539">Nucleus</keyword>
<keyword id="KW-0597">Phosphoprotein</keyword>
<keyword id="KW-0653">Protein transport</keyword>
<keyword id="KW-1185">Reference proteome</keyword>
<keyword id="KW-0813">Transport</keyword>
<name>BIG1_MOUSE</name>
<sequence length="1846" mass="208500">MYEGKKTKNMFLTRALEKILADKEVKKAHHSQLRKACEVALEEIKVETEKQSPPHGEAKAGSGTLPPVKSKTNFIEADKYFLPFELACQSKCPRIVSTSLDCLQKLIAYGHLTGRAPDSTTPGKKLIDRIIETICGCFQGPQTDEGVQLQIIKALLTAVTSQHIEIHEGTVLQAVRTCYNIYLASKNLINQTTAKATLTQMLNVIFARMENQALQEAKQMERERHRQQQHLLQSPVSHHEPESPHLRYLPPQTVDHINQEHEGDLEPQTHDVDKSLQDDTEPENGSDISSAENEQTEADQATAAETLSKNDILYDGDYEEKPLDIVQSIVEEMVNIIVGDMGEGMAISASTEGNTGTVEDGSDSENIQANGIPGTPISVAYTPSLPDDRLSVSSNDTQESGNSSGPSPGAKFSHILQKDAFLVFRSLCKLSMKPLSDGPPDPKSHELRSKILSLQLLLSILQNAGPVFRTNEMFINAIKQYLCVALSKNGVSSVPEVFELSLSIFLTLLSNFKTHLKMQIEVFFKEIFLYILETSTSSFDHKWMVIQTLTRICADAQSVVDIYVNYDCDLNAANIFERLVNDLSKIAQGRGSQELGMSNVQELSLRKKGLECLVSILKCMVEWSKDQYVNPNSQTTLGQEKPSEQEISEVKHPETINRYGSLNSLESTSSSGIGSYSTQMSGTDNPEQFEVLKQQKEIIEQGIDLFNKKPKRGIQYLQEQGMLGTTPEDIAQFLHQEERLDSTQVGEFLGDNDKFNKEVMYAYVDQHDFSGKDFVSALRLFLEGFRLPGEAQKIDRLMEKFAARYLECNQGQTLFASADTAYVLAYSIIMLTTDLHSPQVKNKMTKEQYIKMNRGINDSKDLPEEYLSAIYNEIAGKKISMKETKELTIPTKSTKQNVASEKQRRLLYNLEMEQMAKTAKALMEAVSHVQAPFTSATHLEHVRPMFKLAWTPFLAAFSVGLQDCDDTEVASLCLEGIRCAIRIACIFSIQLERDAYVQALARFTLLTVSSGITEMKQKNIDTIKTLITVAHTDGNYLGNSWHEILKCISQLELAQLIGTGVKPRYISGTVRGREGSLTGTKDQAPDEFVGLGLVGGNVDWKQIASIQESIGETSSQSVVVAVDRIFTGSTRLDGNAIVDFVRWLCAVSMDELLSTTHPRMFSLQKIVEISYYNMGRIRLQWSRIWEVIGDHFNKVGCNPNEDVAIFAVDSLRQLSMKFLEKGELANFRFQKDFLRPFEHIMKRNRSPTIRDMVVRCIAQMVNSQAANIRSGWKNIFSVFHLAASDQDESIVELAFQTTGHIVTLVFEKHFPATIDSFQDAVKCLSEFACNAAFPDTSMEAIRLIRHCAKYVSDRPQAFKEYTSDDMSVAPEDRVWVRGWFPILFELSCIINRCKLDVRTRGLTVMFEIMKTYGHTYEKHWWQDLFRIVFRIFDNMKLPEQQTEKAEWMTTTCNHALYAICDVFTQYLEVLSDVLLDDIFAQLYWCVQQDNEQLARSGTNCLENVVILNGEKFTLEIWDKTCNCTLDIFKTTIPHALLTWRPTSGEAEPPSPSAVSEKPLDAISQKSVDIHDSIQPRSSDNRQQAPLVSVSTVSEEVSKVKSTAKFPEQKLFAALLIKCVVQLELIQTIDNIVFFPATSKKEDAENLAAAQRDAVDFDVRVDTQDQGMYRFLTSQQLFKLLDCLLESHRFAKAFNSNNEQRTALWKAGFKGKSKPNLLKQETSSLACGLRILFRMYMDESRVSAWEEVQQRLLNVCREALSYFLTLTSESHREAWTNLLLLFLTKVLKISDSRFKAHASFYYPLLCEIMQFDLIPELRAVLRRFFLRIGIVFQISQPPEQELGINRQ</sequence>
<gene>
    <name type="primary">Arfgef1</name>
</gene>
<feature type="chain" id="PRO_0000419330" description="Brefeldin A-inhibited guanine nucleotide-exchange protein 1">
    <location>
        <begin position="1"/>
        <end position="1846"/>
    </location>
</feature>
<feature type="domain" description="SEC7" evidence="4">
    <location>
        <begin position="688"/>
        <end position="877"/>
    </location>
</feature>
<feature type="region of interest" description="DCB; DCB:DCB domain and DCB:HUS domain interaction" evidence="1">
    <location>
        <begin position="2"/>
        <end position="224"/>
    </location>
</feature>
<feature type="region of interest" description="Disordered" evidence="5">
    <location>
        <begin position="216"/>
        <end position="249"/>
    </location>
</feature>
<feature type="region of interest" description="Disordered" evidence="5">
    <location>
        <begin position="264"/>
        <end position="304"/>
    </location>
</feature>
<feature type="region of interest" description="Disordered" evidence="5">
    <location>
        <begin position="347"/>
        <end position="410"/>
    </location>
</feature>
<feature type="region of interest" description="HUS; DCB:HUS domain interaction" evidence="1">
    <location>
        <begin position="554"/>
        <end position="574"/>
    </location>
</feature>
<feature type="region of interest" description="Disordered" evidence="5">
    <location>
        <begin position="631"/>
        <end position="684"/>
    </location>
</feature>
<feature type="short sequence motif" description="Nuclear localization signal (NLS)" evidence="1">
    <location>
        <begin position="708"/>
        <end position="712"/>
    </location>
</feature>
<feature type="compositionally biased region" description="Basic and acidic residues" evidence="5">
    <location>
        <begin position="264"/>
        <end position="277"/>
    </location>
</feature>
<feature type="compositionally biased region" description="Polar residues" evidence="5">
    <location>
        <begin position="348"/>
        <end position="357"/>
    </location>
</feature>
<feature type="compositionally biased region" description="Polar residues" evidence="5">
    <location>
        <begin position="391"/>
        <end position="406"/>
    </location>
</feature>
<feature type="compositionally biased region" description="Basic and acidic residues" evidence="5">
    <location>
        <begin position="641"/>
        <end position="655"/>
    </location>
</feature>
<feature type="compositionally biased region" description="Low complexity" evidence="5">
    <location>
        <begin position="661"/>
        <end position="681"/>
    </location>
</feature>
<feature type="modified residue" description="Phosphoserine" evidence="3">
    <location>
        <position position="52"/>
    </location>
</feature>
<feature type="modified residue" description="Phosphoserine" evidence="6">
    <location>
        <position position="286"/>
    </location>
</feature>
<feature type="modified residue" description="Phosphoserine" evidence="6">
    <location>
        <position position="289"/>
    </location>
</feature>
<feature type="modified residue" description="Phosphoserine" evidence="2">
    <location>
        <position position="290"/>
    </location>
</feature>
<feature type="modified residue" description="Phosphoserine" evidence="3">
    <location>
        <position position="394"/>
    </location>
</feature>
<feature type="modified residue" description="Phosphoserine" evidence="3">
    <location>
        <position position="407"/>
    </location>
</feature>
<feature type="modified residue" description="Phosphoserine" evidence="3">
    <location>
        <position position="1076"/>
    </location>
</feature>
<feature type="modified residue" description="Phosphoserine" evidence="2">
    <location>
        <position position="1563"/>
    </location>
</feature>
<feature type="modified residue" description="Phosphoserine" evidence="3">
    <location>
        <position position="1566"/>
    </location>
</feature>